<name>SYFA_NITMU</name>
<comment type="catalytic activity">
    <reaction evidence="1">
        <text>tRNA(Phe) + L-phenylalanine + ATP = L-phenylalanyl-tRNA(Phe) + AMP + diphosphate + H(+)</text>
        <dbReference type="Rhea" id="RHEA:19413"/>
        <dbReference type="Rhea" id="RHEA-COMP:9668"/>
        <dbReference type="Rhea" id="RHEA-COMP:9699"/>
        <dbReference type="ChEBI" id="CHEBI:15378"/>
        <dbReference type="ChEBI" id="CHEBI:30616"/>
        <dbReference type="ChEBI" id="CHEBI:33019"/>
        <dbReference type="ChEBI" id="CHEBI:58095"/>
        <dbReference type="ChEBI" id="CHEBI:78442"/>
        <dbReference type="ChEBI" id="CHEBI:78531"/>
        <dbReference type="ChEBI" id="CHEBI:456215"/>
        <dbReference type="EC" id="6.1.1.20"/>
    </reaction>
</comment>
<comment type="cofactor">
    <cofactor evidence="1">
        <name>Mg(2+)</name>
        <dbReference type="ChEBI" id="CHEBI:18420"/>
    </cofactor>
    <text evidence="1">Binds 2 magnesium ions per tetramer.</text>
</comment>
<comment type="subunit">
    <text evidence="1">Tetramer of two alpha and two beta subunits.</text>
</comment>
<comment type="subcellular location">
    <subcellularLocation>
        <location evidence="1">Cytoplasm</location>
    </subcellularLocation>
</comment>
<comment type="similarity">
    <text evidence="1">Belongs to the class-II aminoacyl-tRNA synthetase family. Phe-tRNA synthetase alpha subunit type 1 subfamily.</text>
</comment>
<feature type="chain" id="PRO_0000232001" description="Phenylalanine--tRNA ligase alpha subunit">
    <location>
        <begin position="1"/>
        <end position="344"/>
    </location>
</feature>
<feature type="binding site" evidence="1">
    <location>
        <position position="259"/>
    </location>
    <ligand>
        <name>Mg(2+)</name>
        <dbReference type="ChEBI" id="CHEBI:18420"/>
        <note>shared with beta subunit</note>
    </ligand>
</feature>
<keyword id="KW-0030">Aminoacyl-tRNA synthetase</keyword>
<keyword id="KW-0067">ATP-binding</keyword>
<keyword id="KW-0963">Cytoplasm</keyword>
<keyword id="KW-0436">Ligase</keyword>
<keyword id="KW-0460">Magnesium</keyword>
<keyword id="KW-0479">Metal-binding</keyword>
<keyword id="KW-0547">Nucleotide-binding</keyword>
<keyword id="KW-0648">Protein biosynthesis</keyword>
<keyword id="KW-1185">Reference proteome</keyword>
<dbReference type="EC" id="6.1.1.20" evidence="1"/>
<dbReference type="EMBL" id="CP000103">
    <property type="protein sequence ID" value="ABB73799.1"/>
    <property type="molecule type" value="Genomic_DNA"/>
</dbReference>
<dbReference type="RefSeq" id="WP_011379853.1">
    <property type="nucleotide sequence ID" value="NC_007614.1"/>
</dbReference>
<dbReference type="SMR" id="Q2YBS2"/>
<dbReference type="STRING" id="323848.Nmul_A0491"/>
<dbReference type="KEGG" id="nmu:Nmul_A0491"/>
<dbReference type="eggNOG" id="COG0016">
    <property type="taxonomic scope" value="Bacteria"/>
</dbReference>
<dbReference type="HOGENOM" id="CLU_025086_0_1_4"/>
<dbReference type="OrthoDB" id="9800719at2"/>
<dbReference type="Proteomes" id="UP000002718">
    <property type="component" value="Chromosome"/>
</dbReference>
<dbReference type="GO" id="GO:0005737">
    <property type="term" value="C:cytoplasm"/>
    <property type="evidence" value="ECO:0007669"/>
    <property type="project" value="UniProtKB-SubCell"/>
</dbReference>
<dbReference type="GO" id="GO:0005524">
    <property type="term" value="F:ATP binding"/>
    <property type="evidence" value="ECO:0007669"/>
    <property type="project" value="UniProtKB-UniRule"/>
</dbReference>
<dbReference type="GO" id="GO:0000287">
    <property type="term" value="F:magnesium ion binding"/>
    <property type="evidence" value="ECO:0007669"/>
    <property type="project" value="UniProtKB-UniRule"/>
</dbReference>
<dbReference type="GO" id="GO:0004826">
    <property type="term" value="F:phenylalanine-tRNA ligase activity"/>
    <property type="evidence" value="ECO:0007669"/>
    <property type="project" value="UniProtKB-UniRule"/>
</dbReference>
<dbReference type="GO" id="GO:0000049">
    <property type="term" value="F:tRNA binding"/>
    <property type="evidence" value="ECO:0007669"/>
    <property type="project" value="InterPro"/>
</dbReference>
<dbReference type="GO" id="GO:0006432">
    <property type="term" value="P:phenylalanyl-tRNA aminoacylation"/>
    <property type="evidence" value="ECO:0007669"/>
    <property type="project" value="UniProtKB-UniRule"/>
</dbReference>
<dbReference type="CDD" id="cd00496">
    <property type="entry name" value="PheRS_alpha_core"/>
    <property type="match status" value="1"/>
</dbReference>
<dbReference type="FunFam" id="3.30.930.10:FF:000003">
    <property type="entry name" value="Phenylalanine--tRNA ligase alpha subunit"/>
    <property type="match status" value="1"/>
</dbReference>
<dbReference type="Gene3D" id="3.30.930.10">
    <property type="entry name" value="Bira Bifunctional Protein, Domain 2"/>
    <property type="match status" value="1"/>
</dbReference>
<dbReference type="HAMAP" id="MF_00281">
    <property type="entry name" value="Phe_tRNA_synth_alpha1"/>
    <property type="match status" value="1"/>
</dbReference>
<dbReference type="InterPro" id="IPR006195">
    <property type="entry name" value="aa-tRNA-synth_II"/>
</dbReference>
<dbReference type="InterPro" id="IPR045864">
    <property type="entry name" value="aa-tRNA-synth_II/BPL/LPL"/>
</dbReference>
<dbReference type="InterPro" id="IPR004529">
    <property type="entry name" value="Phe-tRNA-synth_IIc_asu"/>
</dbReference>
<dbReference type="InterPro" id="IPR004188">
    <property type="entry name" value="Phe-tRNA_ligase_II_N"/>
</dbReference>
<dbReference type="InterPro" id="IPR022911">
    <property type="entry name" value="Phe_tRNA_ligase_alpha1_bac"/>
</dbReference>
<dbReference type="InterPro" id="IPR002319">
    <property type="entry name" value="Phenylalanyl-tRNA_Synthase"/>
</dbReference>
<dbReference type="InterPro" id="IPR010978">
    <property type="entry name" value="tRNA-bd_arm"/>
</dbReference>
<dbReference type="NCBIfam" id="TIGR00468">
    <property type="entry name" value="pheS"/>
    <property type="match status" value="1"/>
</dbReference>
<dbReference type="PANTHER" id="PTHR11538:SF41">
    <property type="entry name" value="PHENYLALANINE--TRNA LIGASE, MITOCHONDRIAL"/>
    <property type="match status" value="1"/>
</dbReference>
<dbReference type="PANTHER" id="PTHR11538">
    <property type="entry name" value="PHENYLALANYL-TRNA SYNTHETASE"/>
    <property type="match status" value="1"/>
</dbReference>
<dbReference type="Pfam" id="PF02912">
    <property type="entry name" value="Phe_tRNA-synt_N"/>
    <property type="match status" value="1"/>
</dbReference>
<dbReference type="Pfam" id="PF01409">
    <property type="entry name" value="tRNA-synt_2d"/>
    <property type="match status" value="1"/>
</dbReference>
<dbReference type="SUPFAM" id="SSF55681">
    <property type="entry name" value="Class II aaRS and biotin synthetases"/>
    <property type="match status" value="1"/>
</dbReference>
<dbReference type="SUPFAM" id="SSF46589">
    <property type="entry name" value="tRNA-binding arm"/>
    <property type="match status" value="1"/>
</dbReference>
<dbReference type="PROSITE" id="PS50862">
    <property type="entry name" value="AA_TRNA_LIGASE_II"/>
    <property type="match status" value="1"/>
</dbReference>
<reference key="1">
    <citation type="submission" date="2005-08" db="EMBL/GenBank/DDBJ databases">
        <title>Complete sequence of chromosome 1 of Nitrosospira multiformis ATCC 25196.</title>
        <authorList>
            <person name="Copeland A."/>
            <person name="Lucas S."/>
            <person name="Lapidus A."/>
            <person name="Barry K."/>
            <person name="Detter J.C."/>
            <person name="Glavina T."/>
            <person name="Hammon N."/>
            <person name="Israni S."/>
            <person name="Pitluck S."/>
            <person name="Chain P."/>
            <person name="Malfatti S."/>
            <person name="Shin M."/>
            <person name="Vergez L."/>
            <person name="Schmutz J."/>
            <person name="Larimer F."/>
            <person name="Land M."/>
            <person name="Hauser L."/>
            <person name="Kyrpides N."/>
            <person name="Lykidis A."/>
            <person name="Richardson P."/>
        </authorList>
    </citation>
    <scope>NUCLEOTIDE SEQUENCE [LARGE SCALE GENOMIC DNA]</scope>
    <source>
        <strain>ATCC 25196 / NCIMB 11849 / C 71</strain>
    </source>
</reference>
<gene>
    <name evidence="1" type="primary">pheS</name>
    <name type="ordered locus">Nmul_A0491</name>
</gene>
<sequence length="344" mass="38973">MTHLDHLLTEAIELFNRTEDLAELEQVKARYLGRHGQLTELLKGLGKIPPEERPAAGSRINQAKESLEAALSRRREAIQEKKLEEQLIEEKLDVTLSGRGTGMGGLHPITLALERIQSLFHSVGFTVASGPEIETDFYNFTALNIPESHPARAMHDTFYVDDENGGASEHLLRTHTSPVQIRYMESNPPPLKVIAPGRVYRCDSDLTHTPMFHQVEGLWIDESANFSALKGILSDFMQHFFERDDLPVRFRPSFFPFTEPSAEMDIGCVMCKTGCRVCSYTGWLEVLGCGMVHPNVFKHVNIDSQKYVGFAFGLGVERLAMLRYGVNDLRLFFENDLRFLKQFN</sequence>
<proteinExistence type="inferred from homology"/>
<evidence type="ECO:0000255" key="1">
    <source>
        <dbReference type="HAMAP-Rule" id="MF_00281"/>
    </source>
</evidence>
<organism>
    <name type="scientific">Nitrosospira multiformis (strain ATCC 25196 / NCIMB 11849 / C 71)</name>
    <dbReference type="NCBI Taxonomy" id="323848"/>
    <lineage>
        <taxon>Bacteria</taxon>
        <taxon>Pseudomonadati</taxon>
        <taxon>Pseudomonadota</taxon>
        <taxon>Betaproteobacteria</taxon>
        <taxon>Nitrosomonadales</taxon>
        <taxon>Nitrosomonadaceae</taxon>
        <taxon>Nitrosospira</taxon>
    </lineage>
</organism>
<protein>
    <recommendedName>
        <fullName evidence="1">Phenylalanine--tRNA ligase alpha subunit</fullName>
        <ecNumber evidence="1">6.1.1.20</ecNumber>
    </recommendedName>
    <alternativeName>
        <fullName evidence="1">Phenylalanyl-tRNA synthetase alpha subunit</fullName>
        <shortName evidence="1">PheRS</shortName>
    </alternativeName>
</protein>
<accession>Q2YBS2</accession>